<protein>
    <recommendedName>
        <fullName evidence="2">D-alanine--D-alanine ligase</fullName>
        <ecNumber evidence="2">6.3.2.4</ecNumber>
    </recommendedName>
    <alternativeName>
        <fullName evidence="2">D-Ala-D-Ala ligase</fullName>
    </alternativeName>
    <alternativeName>
        <fullName evidence="2">D-alanylalanine synthetase</fullName>
    </alternativeName>
</protein>
<proteinExistence type="inferred from homology"/>
<gene>
    <name evidence="2" type="primary">ddl</name>
    <name type="ordered locus">Shal_1854</name>
</gene>
<evidence type="ECO:0000250" key="1"/>
<evidence type="ECO:0000255" key="2">
    <source>
        <dbReference type="HAMAP-Rule" id="MF_00047"/>
    </source>
</evidence>
<sequence length="333" mass="37583">MTQKNLLLLCGGGGDEHSISLLSANFFETQLATLPHFNVLRVELNAKGQYRTQAGELCELTNSKQIRFNDQSKAPWDVDYVIPCIHGYPGETGDIQSYFELINLPYFGCDSEASSNCFNKVTAKMWFSALGIRNTPYIFLNEFNQQAIEETERALEKWGSIFIKAASQGSSVGCYRVDNKEQLANSLEEAFKYSPYVVVEKTINARELEVAAYEVDGEIIATKPGEIICASNTFYSFDEKYAENSQAQTVIEADVDEVIAKQIQEYAIKAFKGMKLRHLSRIDFFLTDENEILLNEINTFPGQTQISMFPKMLQNHGHNFAQYLSGNIMAQLK</sequence>
<reference key="1">
    <citation type="submission" date="2008-01" db="EMBL/GenBank/DDBJ databases">
        <title>Complete sequence of Shewanella halifaxensis HAW-EB4.</title>
        <authorList>
            <consortium name="US DOE Joint Genome Institute"/>
            <person name="Copeland A."/>
            <person name="Lucas S."/>
            <person name="Lapidus A."/>
            <person name="Glavina del Rio T."/>
            <person name="Dalin E."/>
            <person name="Tice H."/>
            <person name="Bruce D."/>
            <person name="Goodwin L."/>
            <person name="Pitluck S."/>
            <person name="Sims D."/>
            <person name="Brettin T."/>
            <person name="Detter J.C."/>
            <person name="Han C."/>
            <person name="Kuske C.R."/>
            <person name="Schmutz J."/>
            <person name="Larimer F."/>
            <person name="Land M."/>
            <person name="Hauser L."/>
            <person name="Kyrpides N."/>
            <person name="Kim E."/>
            <person name="Zhao J.-S."/>
            <person name="Richardson P."/>
        </authorList>
    </citation>
    <scope>NUCLEOTIDE SEQUENCE [LARGE SCALE GENOMIC DNA]</scope>
    <source>
        <strain>HAW-EB4</strain>
    </source>
</reference>
<feature type="chain" id="PRO_1000074788" description="D-alanine--D-alanine ligase">
    <location>
        <begin position="1"/>
        <end position="333"/>
    </location>
</feature>
<feature type="domain" description="ATP-grasp" evidence="2">
    <location>
        <begin position="124"/>
        <end position="329"/>
    </location>
</feature>
<feature type="binding site" evidence="2">
    <location>
        <begin position="154"/>
        <end position="209"/>
    </location>
    <ligand>
        <name>ATP</name>
        <dbReference type="ChEBI" id="CHEBI:30616"/>
    </ligand>
</feature>
<feature type="binding site" evidence="2">
    <location>
        <position position="283"/>
    </location>
    <ligand>
        <name>Mg(2+)</name>
        <dbReference type="ChEBI" id="CHEBI:18420"/>
        <label>1</label>
    </ligand>
</feature>
<feature type="binding site" evidence="2">
    <location>
        <position position="296"/>
    </location>
    <ligand>
        <name>Mg(2+)</name>
        <dbReference type="ChEBI" id="CHEBI:18420"/>
        <label>1</label>
    </ligand>
</feature>
<feature type="binding site" evidence="2">
    <location>
        <position position="296"/>
    </location>
    <ligand>
        <name>Mg(2+)</name>
        <dbReference type="ChEBI" id="CHEBI:18420"/>
        <label>2</label>
    </ligand>
</feature>
<feature type="binding site" evidence="2">
    <location>
        <position position="298"/>
    </location>
    <ligand>
        <name>Mg(2+)</name>
        <dbReference type="ChEBI" id="CHEBI:18420"/>
        <label>2</label>
    </ligand>
</feature>
<comment type="function">
    <text evidence="2">Cell wall formation.</text>
</comment>
<comment type="catalytic activity">
    <reaction evidence="2">
        <text>2 D-alanine + ATP = D-alanyl-D-alanine + ADP + phosphate + H(+)</text>
        <dbReference type="Rhea" id="RHEA:11224"/>
        <dbReference type="ChEBI" id="CHEBI:15378"/>
        <dbReference type="ChEBI" id="CHEBI:30616"/>
        <dbReference type="ChEBI" id="CHEBI:43474"/>
        <dbReference type="ChEBI" id="CHEBI:57416"/>
        <dbReference type="ChEBI" id="CHEBI:57822"/>
        <dbReference type="ChEBI" id="CHEBI:456216"/>
        <dbReference type="EC" id="6.3.2.4"/>
    </reaction>
</comment>
<comment type="cofactor">
    <cofactor evidence="1">
        <name>Mg(2+)</name>
        <dbReference type="ChEBI" id="CHEBI:18420"/>
    </cofactor>
    <cofactor evidence="1">
        <name>Mn(2+)</name>
        <dbReference type="ChEBI" id="CHEBI:29035"/>
    </cofactor>
    <text evidence="1">Binds 2 magnesium or manganese ions per subunit.</text>
</comment>
<comment type="pathway">
    <text evidence="2">Cell wall biogenesis; peptidoglycan biosynthesis.</text>
</comment>
<comment type="subcellular location">
    <subcellularLocation>
        <location evidence="2">Cytoplasm</location>
    </subcellularLocation>
</comment>
<comment type="similarity">
    <text evidence="2">Belongs to the D-alanine--D-alanine ligase family.</text>
</comment>
<dbReference type="EC" id="6.3.2.4" evidence="2"/>
<dbReference type="EMBL" id="CP000931">
    <property type="protein sequence ID" value="ABZ76419.1"/>
    <property type="molecule type" value="Genomic_DNA"/>
</dbReference>
<dbReference type="RefSeq" id="WP_012276951.1">
    <property type="nucleotide sequence ID" value="NC_010334.1"/>
</dbReference>
<dbReference type="SMR" id="B0TRK1"/>
<dbReference type="STRING" id="458817.Shal_1854"/>
<dbReference type="KEGG" id="shl:Shal_1854"/>
<dbReference type="eggNOG" id="COG1181">
    <property type="taxonomic scope" value="Bacteria"/>
</dbReference>
<dbReference type="HOGENOM" id="CLU_039268_0_0_6"/>
<dbReference type="OrthoDB" id="9813261at2"/>
<dbReference type="UniPathway" id="UPA00219"/>
<dbReference type="Proteomes" id="UP000001317">
    <property type="component" value="Chromosome"/>
</dbReference>
<dbReference type="GO" id="GO:0005829">
    <property type="term" value="C:cytosol"/>
    <property type="evidence" value="ECO:0007669"/>
    <property type="project" value="TreeGrafter"/>
</dbReference>
<dbReference type="GO" id="GO:0005524">
    <property type="term" value="F:ATP binding"/>
    <property type="evidence" value="ECO:0007669"/>
    <property type="project" value="UniProtKB-KW"/>
</dbReference>
<dbReference type="GO" id="GO:0008716">
    <property type="term" value="F:D-alanine-D-alanine ligase activity"/>
    <property type="evidence" value="ECO:0007669"/>
    <property type="project" value="UniProtKB-UniRule"/>
</dbReference>
<dbReference type="GO" id="GO:0046872">
    <property type="term" value="F:metal ion binding"/>
    <property type="evidence" value="ECO:0007669"/>
    <property type="project" value="UniProtKB-KW"/>
</dbReference>
<dbReference type="GO" id="GO:0071555">
    <property type="term" value="P:cell wall organization"/>
    <property type="evidence" value="ECO:0007669"/>
    <property type="project" value="UniProtKB-KW"/>
</dbReference>
<dbReference type="GO" id="GO:0009252">
    <property type="term" value="P:peptidoglycan biosynthetic process"/>
    <property type="evidence" value="ECO:0007669"/>
    <property type="project" value="UniProtKB-UniRule"/>
</dbReference>
<dbReference type="GO" id="GO:0008360">
    <property type="term" value="P:regulation of cell shape"/>
    <property type="evidence" value="ECO:0007669"/>
    <property type="project" value="UniProtKB-KW"/>
</dbReference>
<dbReference type="Gene3D" id="3.40.50.20">
    <property type="match status" value="1"/>
</dbReference>
<dbReference type="Gene3D" id="3.30.1490.20">
    <property type="entry name" value="ATP-grasp fold, A domain"/>
    <property type="match status" value="1"/>
</dbReference>
<dbReference type="Gene3D" id="3.30.470.20">
    <property type="entry name" value="ATP-grasp fold, B domain"/>
    <property type="match status" value="1"/>
</dbReference>
<dbReference type="HAMAP" id="MF_00047">
    <property type="entry name" value="Dala_Dala_lig"/>
    <property type="match status" value="1"/>
</dbReference>
<dbReference type="InterPro" id="IPR011761">
    <property type="entry name" value="ATP-grasp"/>
</dbReference>
<dbReference type="InterPro" id="IPR013815">
    <property type="entry name" value="ATP_grasp_subdomain_1"/>
</dbReference>
<dbReference type="InterPro" id="IPR000291">
    <property type="entry name" value="D-Ala_lig_Van_CS"/>
</dbReference>
<dbReference type="InterPro" id="IPR005905">
    <property type="entry name" value="D_ala_D_ala"/>
</dbReference>
<dbReference type="InterPro" id="IPR011095">
    <property type="entry name" value="Dala_Dala_lig_C"/>
</dbReference>
<dbReference type="InterPro" id="IPR011127">
    <property type="entry name" value="Dala_Dala_lig_N"/>
</dbReference>
<dbReference type="InterPro" id="IPR016185">
    <property type="entry name" value="PreATP-grasp_dom_sf"/>
</dbReference>
<dbReference type="NCBIfam" id="TIGR01205">
    <property type="entry name" value="D_ala_D_alaTIGR"/>
    <property type="match status" value="1"/>
</dbReference>
<dbReference type="NCBIfam" id="NF002527">
    <property type="entry name" value="PRK01966.1-3"/>
    <property type="match status" value="1"/>
</dbReference>
<dbReference type="NCBIfam" id="NF002528">
    <property type="entry name" value="PRK01966.1-4"/>
    <property type="match status" value="1"/>
</dbReference>
<dbReference type="PANTHER" id="PTHR23132">
    <property type="entry name" value="D-ALANINE--D-ALANINE LIGASE"/>
    <property type="match status" value="1"/>
</dbReference>
<dbReference type="PANTHER" id="PTHR23132:SF25">
    <property type="entry name" value="D-ALANINE--D-ALANINE LIGASE A"/>
    <property type="match status" value="1"/>
</dbReference>
<dbReference type="Pfam" id="PF07478">
    <property type="entry name" value="Dala_Dala_lig_C"/>
    <property type="match status" value="1"/>
</dbReference>
<dbReference type="Pfam" id="PF01820">
    <property type="entry name" value="Dala_Dala_lig_N"/>
    <property type="match status" value="1"/>
</dbReference>
<dbReference type="PIRSF" id="PIRSF039102">
    <property type="entry name" value="Ddl/VanB"/>
    <property type="match status" value="1"/>
</dbReference>
<dbReference type="SUPFAM" id="SSF56059">
    <property type="entry name" value="Glutathione synthetase ATP-binding domain-like"/>
    <property type="match status" value="1"/>
</dbReference>
<dbReference type="SUPFAM" id="SSF52440">
    <property type="entry name" value="PreATP-grasp domain"/>
    <property type="match status" value="1"/>
</dbReference>
<dbReference type="PROSITE" id="PS50975">
    <property type="entry name" value="ATP_GRASP"/>
    <property type="match status" value="1"/>
</dbReference>
<dbReference type="PROSITE" id="PS00843">
    <property type="entry name" value="DALA_DALA_LIGASE_1"/>
    <property type="match status" value="1"/>
</dbReference>
<dbReference type="PROSITE" id="PS00844">
    <property type="entry name" value="DALA_DALA_LIGASE_2"/>
    <property type="match status" value="1"/>
</dbReference>
<organism>
    <name type="scientific">Shewanella halifaxensis (strain HAW-EB4)</name>
    <dbReference type="NCBI Taxonomy" id="458817"/>
    <lineage>
        <taxon>Bacteria</taxon>
        <taxon>Pseudomonadati</taxon>
        <taxon>Pseudomonadota</taxon>
        <taxon>Gammaproteobacteria</taxon>
        <taxon>Alteromonadales</taxon>
        <taxon>Shewanellaceae</taxon>
        <taxon>Shewanella</taxon>
    </lineage>
</organism>
<keyword id="KW-0067">ATP-binding</keyword>
<keyword id="KW-0133">Cell shape</keyword>
<keyword id="KW-0961">Cell wall biogenesis/degradation</keyword>
<keyword id="KW-0963">Cytoplasm</keyword>
<keyword id="KW-0436">Ligase</keyword>
<keyword id="KW-0460">Magnesium</keyword>
<keyword id="KW-0464">Manganese</keyword>
<keyword id="KW-0479">Metal-binding</keyword>
<keyword id="KW-0547">Nucleotide-binding</keyword>
<keyword id="KW-0573">Peptidoglycan synthesis</keyword>
<accession>B0TRK1</accession>
<name>DDL_SHEHH</name>